<dbReference type="EMBL" id="AE017285">
    <property type="protein sequence ID" value="AAS95003.1"/>
    <property type="molecule type" value="Genomic_DNA"/>
</dbReference>
<dbReference type="RefSeq" id="WP_010937827.1">
    <property type="nucleotide sequence ID" value="NC_002937.3"/>
</dbReference>
<dbReference type="RefSeq" id="YP_009744.1">
    <property type="nucleotide sequence ID" value="NC_002937.3"/>
</dbReference>
<dbReference type="SMR" id="Q72EP8"/>
<dbReference type="IntAct" id="Q72EP8">
    <property type="interactions" value="2"/>
</dbReference>
<dbReference type="STRING" id="882.DVU_0521"/>
<dbReference type="PaxDb" id="882-DVU_0521"/>
<dbReference type="EnsemblBacteria" id="AAS95003">
    <property type="protein sequence ID" value="AAS95003"/>
    <property type="gene ID" value="DVU_0521"/>
</dbReference>
<dbReference type="KEGG" id="dvu:DVU_0521"/>
<dbReference type="PATRIC" id="fig|882.5.peg.498"/>
<dbReference type="eggNOG" id="COG1551">
    <property type="taxonomic scope" value="Bacteria"/>
</dbReference>
<dbReference type="HOGENOM" id="CLU_164837_0_2_7"/>
<dbReference type="OrthoDB" id="9809061at2"/>
<dbReference type="PhylomeDB" id="Q72EP8"/>
<dbReference type="Proteomes" id="UP000002194">
    <property type="component" value="Chromosome"/>
</dbReference>
<dbReference type="GO" id="GO:0005829">
    <property type="term" value="C:cytosol"/>
    <property type="evidence" value="ECO:0007669"/>
    <property type="project" value="TreeGrafter"/>
</dbReference>
<dbReference type="GO" id="GO:0048027">
    <property type="term" value="F:mRNA 5'-UTR binding"/>
    <property type="evidence" value="ECO:0007669"/>
    <property type="project" value="UniProtKB-UniRule"/>
</dbReference>
<dbReference type="GO" id="GO:0044781">
    <property type="term" value="P:bacterial-type flagellum organization"/>
    <property type="evidence" value="ECO:0007669"/>
    <property type="project" value="UniProtKB-KW"/>
</dbReference>
<dbReference type="GO" id="GO:0006402">
    <property type="term" value="P:mRNA catabolic process"/>
    <property type="evidence" value="ECO:0007669"/>
    <property type="project" value="InterPro"/>
</dbReference>
<dbReference type="GO" id="GO:0045947">
    <property type="term" value="P:negative regulation of translational initiation"/>
    <property type="evidence" value="ECO:0007669"/>
    <property type="project" value="UniProtKB-UniRule"/>
</dbReference>
<dbReference type="GO" id="GO:1902208">
    <property type="term" value="P:regulation of bacterial-type flagellum assembly"/>
    <property type="evidence" value="ECO:0007669"/>
    <property type="project" value="UniProtKB-UniRule"/>
</dbReference>
<dbReference type="GO" id="GO:0006109">
    <property type="term" value="P:regulation of carbohydrate metabolic process"/>
    <property type="evidence" value="ECO:0007669"/>
    <property type="project" value="InterPro"/>
</dbReference>
<dbReference type="Gene3D" id="2.60.40.4380">
    <property type="entry name" value="Translational regulator CsrA"/>
    <property type="match status" value="1"/>
</dbReference>
<dbReference type="HAMAP" id="MF_00167">
    <property type="entry name" value="CsrA"/>
    <property type="match status" value="1"/>
</dbReference>
<dbReference type="InterPro" id="IPR003751">
    <property type="entry name" value="CsrA"/>
</dbReference>
<dbReference type="InterPro" id="IPR036107">
    <property type="entry name" value="CsrA_sf"/>
</dbReference>
<dbReference type="NCBIfam" id="TIGR00202">
    <property type="entry name" value="csrA"/>
    <property type="match status" value="1"/>
</dbReference>
<dbReference type="NCBIfam" id="NF002469">
    <property type="entry name" value="PRK01712.1"/>
    <property type="match status" value="1"/>
</dbReference>
<dbReference type="PANTHER" id="PTHR34984">
    <property type="entry name" value="CARBON STORAGE REGULATOR"/>
    <property type="match status" value="1"/>
</dbReference>
<dbReference type="PANTHER" id="PTHR34984:SF1">
    <property type="entry name" value="CARBON STORAGE REGULATOR"/>
    <property type="match status" value="1"/>
</dbReference>
<dbReference type="Pfam" id="PF02599">
    <property type="entry name" value="CsrA"/>
    <property type="match status" value="1"/>
</dbReference>
<dbReference type="SUPFAM" id="SSF117130">
    <property type="entry name" value="CsrA-like"/>
    <property type="match status" value="1"/>
</dbReference>
<protein>
    <recommendedName>
        <fullName evidence="1">Translational regulator CsrA</fullName>
    </recommendedName>
</protein>
<name>CSRA_NITV2</name>
<feature type="chain" id="PRO_0000177060" description="Translational regulator CsrA">
    <location>
        <begin position="1"/>
        <end position="78"/>
    </location>
</feature>
<accession>Q72EP8</accession>
<gene>
    <name evidence="1" type="primary">csrA</name>
    <name type="ordered locus">DVU_0521</name>
</gene>
<keyword id="KW-1005">Bacterial flagellum biogenesis</keyword>
<keyword id="KW-0963">Cytoplasm</keyword>
<keyword id="KW-1185">Reference proteome</keyword>
<keyword id="KW-0678">Repressor</keyword>
<keyword id="KW-0694">RNA-binding</keyword>
<keyword id="KW-0810">Translation regulation</keyword>
<sequence length="78" mass="8815">MLILTRKAGESLHLGDDIRITVLGIQGKQVKIGIEVPGDMVVYREEVYRRVIEENRMALDISNADLLAATKIWHGRTK</sequence>
<organism>
    <name type="scientific">Nitratidesulfovibrio vulgaris (strain ATCC 29579 / DSM 644 / CCUG 34227 / NCIMB 8303 / VKM B-1760 / Hildenborough)</name>
    <name type="common">Desulfovibrio vulgaris</name>
    <dbReference type="NCBI Taxonomy" id="882"/>
    <lineage>
        <taxon>Bacteria</taxon>
        <taxon>Pseudomonadati</taxon>
        <taxon>Thermodesulfobacteriota</taxon>
        <taxon>Desulfovibrionia</taxon>
        <taxon>Desulfovibrionales</taxon>
        <taxon>Desulfovibrionaceae</taxon>
        <taxon>Nitratidesulfovibrio</taxon>
    </lineage>
</organism>
<evidence type="ECO:0000255" key="1">
    <source>
        <dbReference type="HAMAP-Rule" id="MF_00167"/>
    </source>
</evidence>
<comment type="function">
    <text evidence="1">A translational regulator that binds mRNA to regulate translation initiation and/or mRNA stability. Usually binds in the 5'-UTR at or near the Shine-Dalgarno sequence preventing ribosome-binding, thus repressing translation. Its main target seems to be the major flagellin gene, while its function is anatagonized by FliW.</text>
</comment>
<comment type="subunit">
    <text evidence="1">Homodimer; the beta-strands of each monomer intercalate to form a hydrophobic core, while the alpha-helices form wings that extend away from the core.</text>
</comment>
<comment type="subcellular location">
    <subcellularLocation>
        <location evidence="1">Cytoplasm</location>
    </subcellularLocation>
</comment>
<comment type="similarity">
    <text evidence="1">Belongs to the CsrA/RsmA family.</text>
</comment>
<reference key="1">
    <citation type="journal article" date="2004" name="Nat. Biotechnol.">
        <title>The genome sequence of the anaerobic, sulfate-reducing bacterium Desulfovibrio vulgaris Hildenborough.</title>
        <authorList>
            <person name="Heidelberg J.F."/>
            <person name="Seshadri R."/>
            <person name="Haveman S.A."/>
            <person name="Hemme C.L."/>
            <person name="Paulsen I.T."/>
            <person name="Kolonay J.F."/>
            <person name="Eisen J.A."/>
            <person name="Ward N.L."/>
            <person name="Methe B.A."/>
            <person name="Brinkac L.M."/>
            <person name="Daugherty S.C."/>
            <person name="DeBoy R.T."/>
            <person name="Dodson R.J."/>
            <person name="Durkin A.S."/>
            <person name="Madupu R."/>
            <person name="Nelson W.C."/>
            <person name="Sullivan S.A."/>
            <person name="Fouts D.E."/>
            <person name="Haft D.H."/>
            <person name="Selengut J."/>
            <person name="Peterson J.D."/>
            <person name="Davidsen T.M."/>
            <person name="Zafar N."/>
            <person name="Zhou L."/>
            <person name="Radune D."/>
            <person name="Dimitrov G."/>
            <person name="Hance M."/>
            <person name="Tran K."/>
            <person name="Khouri H.M."/>
            <person name="Gill J."/>
            <person name="Utterback T.R."/>
            <person name="Feldblyum T.V."/>
            <person name="Wall J.D."/>
            <person name="Voordouw G."/>
            <person name="Fraser C.M."/>
        </authorList>
    </citation>
    <scope>NUCLEOTIDE SEQUENCE [LARGE SCALE GENOMIC DNA]</scope>
    <source>
        <strain>ATCC 29579 / DSM 644 / CCUG 34227 / NCIMB 8303 / VKM B-1760 / Hildenborough</strain>
    </source>
</reference>
<proteinExistence type="inferred from homology"/>